<name>RECR_RHOBA</name>
<protein>
    <recommendedName>
        <fullName evidence="1">Recombination protein RecR</fullName>
    </recommendedName>
</protein>
<accession>Q7UQ68</accession>
<proteinExistence type="inferred from homology"/>
<comment type="function">
    <text evidence="1">May play a role in DNA repair. It seems to be involved in an RecBC-independent recombinational process of DNA repair. It may act with RecF and RecO.</text>
</comment>
<comment type="similarity">
    <text evidence="1">Belongs to the RecR family.</text>
</comment>
<evidence type="ECO:0000255" key="1">
    <source>
        <dbReference type="HAMAP-Rule" id="MF_00017"/>
    </source>
</evidence>
<reference key="1">
    <citation type="journal article" date="2003" name="Proc. Natl. Acad. Sci. U.S.A.">
        <title>Complete genome sequence of the marine planctomycete Pirellula sp. strain 1.</title>
        <authorList>
            <person name="Gloeckner F.O."/>
            <person name="Kube M."/>
            <person name="Bauer M."/>
            <person name="Teeling H."/>
            <person name="Lombardot T."/>
            <person name="Ludwig W."/>
            <person name="Gade D."/>
            <person name="Beck A."/>
            <person name="Borzym K."/>
            <person name="Heitmann K."/>
            <person name="Rabus R."/>
            <person name="Schlesner H."/>
            <person name="Amann R."/>
            <person name="Reinhardt R."/>
        </authorList>
    </citation>
    <scope>NUCLEOTIDE SEQUENCE [LARGE SCALE GENOMIC DNA]</scope>
    <source>
        <strain>DSM 10527 / NCIMB 13988 / SH1</strain>
    </source>
</reference>
<gene>
    <name evidence="1" type="primary">recR</name>
    <name type="ordered locus">RB6492</name>
</gene>
<keyword id="KW-0227">DNA damage</keyword>
<keyword id="KW-0233">DNA recombination</keyword>
<keyword id="KW-0234">DNA repair</keyword>
<keyword id="KW-0479">Metal-binding</keyword>
<keyword id="KW-1185">Reference proteome</keyword>
<keyword id="KW-0862">Zinc</keyword>
<keyword id="KW-0863">Zinc-finger</keyword>
<dbReference type="EMBL" id="BX294144">
    <property type="protein sequence ID" value="CAD74837.1"/>
    <property type="molecule type" value="Genomic_DNA"/>
</dbReference>
<dbReference type="RefSeq" id="NP_867291.1">
    <property type="nucleotide sequence ID" value="NC_005027.1"/>
</dbReference>
<dbReference type="RefSeq" id="WP_007327785.1">
    <property type="nucleotide sequence ID" value="NC_005027.1"/>
</dbReference>
<dbReference type="SMR" id="Q7UQ68"/>
<dbReference type="FunCoup" id="Q7UQ68">
    <property type="interactions" value="198"/>
</dbReference>
<dbReference type="STRING" id="243090.RB6492"/>
<dbReference type="EnsemblBacteria" id="CAD74837">
    <property type="protein sequence ID" value="CAD74837"/>
    <property type="gene ID" value="RB6492"/>
</dbReference>
<dbReference type="KEGG" id="rba:RB6492"/>
<dbReference type="PATRIC" id="fig|243090.15.peg.3146"/>
<dbReference type="eggNOG" id="COG0353">
    <property type="taxonomic scope" value="Bacteria"/>
</dbReference>
<dbReference type="HOGENOM" id="CLU_060739_1_0_0"/>
<dbReference type="InParanoid" id="Q7UQ68"/>
<dbReference type="OrthoDB" id="9802672at2"/>
<dbReference type="Proteomes" id="UP000001025">
    <property type="component" value="Chromosome"/>
</dbReference>
<dbReference type="GO" id="GO:0003677">
    <property type="term" value="F:DNA binding"/>
    <property type="evidence" value="ECO:0007669"/>
    <property type="project" value="UniProtKB-UniRule"/>
</dbReference>
<dbReference type="GO" id="GO:0008270">
    <property type="term" value="F:zinc ion binding"/>
    <property type="evidence" value="ECO:0007669"/>
    <property type="project" value="UniProtKB-KW"/>
</dbReference>
<dbReference type="GO" id="GO:0006302">
    <property type="term" value="P:double-strand break repair"/>
    <property type="evidence" value="ECO:0000318"/>
    <property type="project" value="GO_Central"/>
</dbReference>
<dbReference type="GO" id="GO:0000725">
    <property type="term" value="P:recombinational repair"/>
    <property type="evidence" value="ECO:0000318"/>
    <property type="project" value="GO_Central"/>
</dbReference>
<dbReference type="CDD" id="cd01025">
    <property type="entry name" value="TOPRIM_recR"/>
    <property type="match status" value="1"/>
</dbReference>
<dbReference type="Gene3D" id="3.30.60.80">
    <property type="match status" value="1"/>
</dbReference>
<dbReference type="Gene3D" id="3.40.1360.10">
    <property type="match status" value="1"/>
</dbReference>
<dbReference type="Gene3D" id="1.10.8.420">
    <property type="entry name" value="RecR Domain 1"/>
    <property type="match status" value="1"/>
</dbReference>
<dbReference type="HAMAP" id="MF_00017">
    <property type="entry name" value="RecR"/>
    <property type="match status" value="1"/>
</dbReference>
<dbReference type="InterPro" id="IPR000093">
    <property type="entry name" value="DNA_Rcmb_RecR"/>
</dbReference>
<dbReference type="InterPro" id="IPR023627">
    <property type="entry name" value="Rcmb_RecR"/>
</dbReference>
<dbReference type="InterPro" id="IPR015967">
    <property type="entry name" value="Rcmb_RecR_Znf"/>
</dbReference>
<dbReference type="InterPro" id="IPR006171">
    <property type="entry name" value="TOPRIM_dom"/>
</dbReference>
<dbReference type="InterPro" id="IPR034137">
    <property type="entry name" value="TOPRIM_RecR"/>
</dbReference>
<dbReference type="NCBIfam" id="TIGR00615">
    <property type="entry name" value="recR"/>
    <property type="match status" value="1"/>
</dbReference>
<dbReference type="PANTHER" id="PTHR30446">
    <property type="entry name" value="RECOMBINATION PROTEIN RECR"/>
    <property type="match status" value="1"/>
</dbReference>
<dbReference type="PANTHER" id="PTHR30446:SF0">
    <property type="entry name" value="RECOMBINATION PROTEIN RECR"/>
    <property type="match status" value="1"/>
</dbReference>
<dbReference type="Pfam" id="PF21176">
    <property type="entry name" value="RecR_HhH"/>
    <property type="match status" value="1"/>
</dbReference>
<dbReference type="Pfam" id="PF02132">
    <property type="entry name" value="RecR_ZnF"/>
    <property type="match status" value="1"/>
</dbReference>
<dbReference type="Pfam" id="PF13662">
    <property type="entry name" value="Toprim_4"/>
    <property type="match status" value="1"/>
</dbReference>
<dbReference type="SMART" id="SM00493">
    <property type="entry name" value="TOPRIM"/>
    <property type="match status" value="1"/>
</dbReference>
<dbReference type="SUPFAM" id="SSF111304">
    <property type="entry name" value="Recombination protein RecR"/>
    <property type="match status" value="1"/>
</dbReference>
<dbReference type="PROSITE" id="PS01300">
    <property type="entry name" value="RECR"/>
    <property type="match status" value="1"/>
</dbReference>
<dbReference type="PROSITE" id="PS50880">
    <property type="entry name" value="TOPRIM"/>
    <property type="match status" value="1"/>
</dbReference>
<feature type="chain" id="PRO_0000190372" description="Recombination protein RecR">
    <location>
        <begin position="1"/>
        <end position="199"/>
    </location>
</feature>
<feature type="domain" description="Toprim" evidence="1">
    <location>
        <begin position="81"/>
        <end position="176"/>
    </location>
</feature>
<feature type="zinc finger region" description="C4-type" evidence="1">
    <location>
        <begin position="58"/>
        <end position="73"/>
    </location>
</feature>
<organism>
    <name type="scientific">Rhodopirellula baltica (strain DSM 10527 / NCIMB 13988 / SH1)</name>
    <dbReference type="NCBI Taxonomy" id="243090"/>
    <lineage>
        <taxon>Bacteria</taxon>
        <taxon>Pseudomonadati</taxon>
        <taxon>Planctomycetota</taxon>
        <taxon>Planctomycetia</taxon>
        <taxon>Pirellulales</taxon>
        <taxon>Pirellulaceae</taxon>
        <taxon>Rhodopirellula</taxon>
    </lineage>
</organism>
<sequence length="199" mass="21844">MSGHAGAVSDLVDQLSKLPGIGRKSAERLAFHLLRVHEDEALALASAIRRVRTDVRYCSVCYNLSETELCRICSDPKRDATRLCVVEQPRDLLSLDASGVYSGLYHVLLGRIAPLDGITPDQLTIDSLVERVRTGNFSEIIMATNPTVEGDGTSLYLSNLMQEFPVEITRLARGITSGSVLEYANREIIADALTGRQRL</sequence>